<reference key="1">
    <citation type="journal article" date="1990" name="Mol. Endocrinol.">
        <title>Cloning of complementary DNAs encoding islet amyloid polypeptide, insulin, and glucagon precursors from a New World rodent, the degu, Octodon degus.</title>
        <authorList>
            <person name="Nishi M."/>
            <person name="Steiner D.F."/>
        </authorList>
    </citation>
    <scope>NUCLEOTIDE SEQUENCE [MRNA]</scope>
</reference>
<reference key="2">
    <citation type="journal article" date="1990" name="Biochem. Biophys. Res. Commun.">
        <title>Amino acid sequence from degu islet amyloid-derived insulin shows unique sequence characteristics.</title>
        <authorList>
            <person name="Hellman U."/>
            <person name="Wernstedt C."/>
            <person name="Westermark P."/>
            <person name="O'Brien T.D."/>
            <person name="Rathbun W.B."/>
            <person name="Johnson K.H."/>
        </authorList>
    </citation>
    <scope>PROTEIN SEQUENCE OF 25-53 AND 87-109</scope>
</reference>
<gene>
    <name type="primary">INS</name>
</gene>
<name>INS_OCTDE</name>
<feature type="signal peptide" evidence="2">
    <location>
        <begin position="1"/>
        <end position="24"/>
    </location>
</feature>
<feature type="peptide" id="PRO_0000015855" description="Insulin B chain" evidence="2">
    <location>
        <begin position="25"/>
        <end position="53"/>
    </location>
</feature>
<feature type="propeptide" id="PRO_0000015856" description="C peptide">
    <location>
        <begin position="56"/>
        <end position="84"/>
    </location>
</feature>
<feature type="peptide" id="PRO_0000015857" description="Insulin A chain" evidence="2">
    <location>
        <begin position="87"/>
        <end position="109"/>
    </location>
</feature>
<feature type="disulfide bond" description="Interchain (between B and A chains)" evidence="1">
    <location>
        <begin position="31"/>
        <end position="93"/>
    </location>
</feature>
<feature type="disulfide bond" description="Interchain (between B and A chains)" evidence="1">
    <location>
        <begin position="43"/>
        <end position="106"/>
    </location>
</feature>
<feature type="disulfide bond" evidence="1">
    <location>
        <begin position="92"/>
        <end position="97"/>
    </location>
</feature>
<proteinExistence type="evidence at protein level"/>
<protein>
    <recommendedName>
        <fullName>Insulin</fullName>
    </recommendedName>
    <component>
        <recommendedName>
            <fullName>Insulin B chain</fullName>
        </recommendedName>
    </component>
    <component>
        <recommendedName>
            <fullName>Insulin A chain</fullName>
        </recommendedName>
    </component>
</protein>
<evidence type="ECO:0000250" key="1"/>
<evidence type="ECO:0000269" key="2">
    <source>
    </source>
</evidence>
<evidence type="ECO:0000305" key="3"/>
<sequence>MAPWMHLLTVLALLALWGPNSVQAYSSQHLCGSNLVEALYMTCGRSGFYRPHDRRELEDLQVEQAELGLEAGGLQPSALEMILQKRGIVDQCCNNICTFNQLQNYCNVP</sequence>
<comment type="function">
    <text>Insulin decreases blood glucose concentration. It increases cell permeability to monosaccharides, amino acids and fatty acids. It accelerates glycolysis, the pentose phosphate cycle, and glycogen synthesis in liver.</text>
</comment>
<comment type="subunit">
    <text>Heterodimer of a B chain and an A chain linked by two disulfide bonds.</text>
</comment>
<comment type="subcellular location">
    <subcellularLocation>
        <location>Secreted</location>
    </subcellularLocation>
</comment>
<comment type="similarity">
    <text evidence="3">Belongs to the insulin family.</text>
</comment>
<dbReference type="EMBL" id="M57671">
    <property type="protein sequence ID" value="AAA40590.1"/>
    <property type="molecule type" value="mRNA"/>
</dbReference>
<dbReference type="PIR" id="B36118">
    <property type="entry name" value="IPRTDU"/>
</dbReference>
<dbReference type="RefSeq" id="XP_004627141.1">
    <property type="nucleotide sequence ID" value="XM_004627084.1"/>
</dbReference>
<dbReference type="SMR" id="P17715"/>
<dbReference type="FunCoup" id="P17715">
    <property type="interactions" value="1228"/>
</dbReference>
<dbReference type="Ensembl" id="ENSODET00000023906">
    <property type="protein sequence ID" value="ENSODEP00000023635"/>
    <property type="gene ID" value="ENSODEG00000017307"/>
</dbReference>
<dbReference type="GeneID" id="101571541"/>
<dbReference type="CTD" id="3630"/>
<dbReference type="InParanoid" id="P17715"/>
<dbReference type="OMA" id="YAFKDQM"/>
<dbReference type="OrthoDB" id="10019596at2759"/>
<dbReference type="Proteomes" id="UP000515203">
    <property type="component" value="Unplaced"/>
</dbReference>
<dbReference type="GO" id="GO:0005615">
    <property type="term" value="C:extracellular space"/>
    <property type="evidence" value="ECO:0007669"/>
    <property type="project" value="Ensembl"/>
</dbReference>
<dbReference type="GO" id="GO:0005179">
    <property type="term" value="F:hormone activity"/>
    <property type="evidence" value="ECO:0007669"/>
    <property type="project" value="UniProtKB-KW"/>
</dbReference>
<dbReference type="GO" id="GO:0042802">
    <property type="term" value="F:identical protein binding"/>
    <property type="evidence" value="ECO:0007669"/>
    <property type="project" value="Ensembl"/>
</dbReference>
<dbReference type="GO" id="GO:0005158">
    <property type="term" value="F:insulin receptor binding"/>
    <property type="evidence" value="ECO:0007669"/>
    <property type="project" value="Ensembl"/>
</dbReference>
<dbReference type="GO" id="GO:0005159">
    <property type="term" value="F:insulin-like growth factor receptor binding"/>
    <property type="evidence" value="ECO:0007669"/>
    <property type="project" value="Ensembl"/>
</dbReference>
<dbReference type="GO" id="GO:0002020">
    <property type="term" value="F:protease binding"/>
    <property type="evidence" value="ECO:0007669"/>
    <property type="project" value="Ensembl"/>
</dbReference>
<dbReference type="GO" id="GO:0006953">
    <property type="term" value="P:acute-phase response"/>
    <property type="evidence" value="ECO:0007669"/>
    <property type="project" value="Ensembl"/>
</dbReference>
<dbReference type="GO" id="GO:0046631">
    <property type="term" value="P:alpha-beta T cell activation"/>
    <property type="evidence" value="ECO:0007669"/>
    <property type="project" value="Ensembl"/>
</dbReference>
<dbReference type="GO" id="GO:0055089">
    <property type="term" value="P:fatty acid homeostasis"/>
    <property type="evidence" value="ECO:0007669"/>
    <property type="project" value="Ensembl"/>
</dbReference>
<dbReference type="GO" id="GO:0007186">
    <property type="term" value="P:G protein-coupled receptor signaling pathway"/>
    <property type="evidence" value="ECO:0007669"/>
    <property type="project" value="Ensembl"/>
</dbReference>
<dbReference type="GO" id="GO:0042593">
    <property type="term" value="P:glucose homeostasis"/>
    <property type="evidence" value="ECO:0007669"/>
    <property type="project" value="Ensembl"/>
</dbReference>
<dbReference type="GO" id="GO:0006006">
    <property type="term" value="P:glucose metabolic process"/>
    <property type="evidence" value="ECO:0007669"/>
    <property type="project" value="UniProtKB-KW"/>
</dbReference>
<dbReference type="GO" id="GO:0008286">
    <property type="term" value="P:insulin receptor signaling pathway"/>
    <property type="evidence" value="ECO:0007669"/>
    <property type="project" value="Ensembl"/>
</dbReference>
<dbReference type="GO" id="GO:0002674">
    <property type="term" value="P:negative regulation of acute inflammatory response"/>
    <property type="evidence" value="ECO:0007669"/>
    <property type="project" value="Ensembl"/>
</dbReference>
<dbReference type="GO" id="GO:0045922">
    <property type="term" value="P:negative regulation of fatty acid metabolic process"/>
    <property type="evidence" value="ECO:0007669"/>
    <property type="project" value="Ensembl"/>
</dbReference>
<dbReference type="GO" id="GO:2000252">
    <property type="term" value="P:negative regulation of feeding behavior"/>
    <property type="evidence" value="ECO:0007669"/>
    <property type="project" value="Ensembl"/>
</dbReference>
<dbReference type="GO" id="GO:0010629">
    <property type="term" value="P:negative regulation of gene expression"/>
    <property type="evidence" value="ECO:0007669"/>
    <property type="project" value="Ensembl"/>
</dbReference>
<dbReference type="GO" id="GO:0045818">
    <property type="term" value="P:negative regulation of glycogen catabolic process"/>
    <property type="evidence" value="ECO:0007669"/>
    <property type="project" value="Ensembl"/>
</dbReference>
<dbReference type="GO" id="GO:0050995">
    <property type="term" value="P:negative regulation of lipid catabolic process"/>
    <property type="evidence" value="ECO:0007669"/>
    <property type="project" value="Ensembl"/>
</dbReference>
<dbReference type="GO" id="GO:0042177">
    <property type="term" value="P:negative regulation of protein catabolic process"/>
    <property type="evidence" value="ECO:0007669"/>
    <property type="project" value="Ensembl"/>
</dbReference>
<dbReference type="GO" id="GO:0050709">
    <property type="term" value="P:negative regulation of protein secretion"/>
    <property type="evidence" value="ECO:0007669"/>
    <property type="project" value="Ensembl"/>
</dbReference>
<dbReference type="GO" id="GO:1903427">
    <property type="term" value="P:negative regulation of reactive oxygen species biosynthetic process"/>
    <property type="evidence" value="ECO:0007669"/>
    <property type="project" value="Ensembl"/>
</dbReference>
<dbReference type="GO" id="GO:0060266">
    <property type="term" value="P:negative regulation of respiratory burst involved in inflammatory response"/>
    <property type="evidence" value="ECO:0007669"/>
    <property type="project" value="Ensembl"/>
</dbReference>
<dbReference type="GO" id="GO:1990535">
    <property type="term" value="P:neuron projection maintenance"/>
    <property type="evidence" value="ECO:0007669"/>
    <property type="project" value="Ensembl"/>
</dbReference>
<dbReference type="GO" id="GO:0038060">
    <property type="term" value="P:nitric oxide-cGMP-mediated signaling"/>
    <property type="evidence" value="ECO:0007669"/>
    <property type="project" value="Ensembl"/>
</dbReference>
<dbReference type="GO" id="GO:0043123">
    <property type="term" value="P:positive regulation of canonical NF-kappaB signal transduction"/>
    <property type="evidence" value="ECO:0007669"/>
    <property type="project" value="Ensembl"/>
</dbReference>
<dbReference type="GO" id="GO:0008284">
    <property type="term" value="P:positive regulation of cell population proliferation"/>
    <property type="evidence" value="ECO:0007669"/>
    <property type="project" value="Ensembl"/>
</dbReference>
<dbReference type="GO" id="GO:0001819">
    <property type="term" value="P:positive regulation of cytokine production"/>
    <property type="evidence" value="ECO:0007669"/>
    <property type="project" value="Ensembl"/>
</dbReference>
<dbReference type="GO" id="GO:0046326">
    <property type="term" value="P:positive regulation of D-glucose import"/>
    <property type="evidence" value="ECO:0007669"/>
    <property type="project" value="Ensembl"/>
</dbReference>
<dbReference type="GO" id="GO:1902952">
    <property type="term" value="P:positive regulation of dendritic spine maintenance"/>
    <property type="evidence" value="ECO:0007669"/>
    <property type="project" value="Ensembl"/>
</dbReference>
<dbReference type="GO" id="GO:0045725">
    <property type="term" value="P:positive regulation of glycogen biosynthetic process"/>
    <property type="evidence" value="ECO:0007669"/>
    <property type="project" value="Ensembl"/>
</dbReference>
<dbReference type="GO" id="GO:0045821">
    <property type="term" value="P:positive regulation of glycolytic process"/>
    <property type="evidence" value="ECO:0007669"/>
    <property type="project" value="Ensembl"/>
</dbReference>
<dbReference type="GO" id="GO:0046628">
    <property type="term" value="P:positive regulation of insulin receptor signaling pathway"/>
    <property type="evidence" value="ECO:0007669"/>
    <property type="project" value="Ensembl"/>
</dbReference>
<dbReference type="GO" id="GO:0043410">
    <property type="term" value="P:positive regulation of MAPK cascade"/>
    <property type="evidence" value="ECO:0007669"/>
    <property type="project" value="Ensembl"/>
</dbReference>
<dbReference type="GO" id="GO:0045840">
    <property type="term" value="P:positive regulation of mitotic nuclear division"/>
    <property type="evidence" value="ECO:0007669"/>
    <property type="project" value="Ensembl"/>
</dbReference>
<dbReference type="GO" id="GO:0010750">
    <property type="term" value="P:positive regulation of nitric oxide mediated signal transduction"/>
    <property type="evidence" value="ECO:0007669"/>
    <property type="project" value="Ensembl"/>
</dbReference>
<dbReference type="GO" id="GO:0051897">
    <property type="term" value="P:positive regulation of phosphatidylinositol 3-kinase/protein kinase B signal transduction"/>
    <property type="evidence" value="ECO:0007669"/>
    <property type="project" value="Ensembl"/>
</dbReference>
<dbReference type="GO" id="GO:1900182">
    <property type="term" value="P:positive regulation of protein localization to nucleus"/>
    <property type="evidence" value="ECO:0007669"/>
    <property type="project" value="Ensembl"/>
</dbReference>
<dbReference type="GO" id="GO:0050714">
    <property type="term" value="P:positive regulation of protein secretion"/>
    <property type="evidence" value="ECO:0007669"/>
    <property type="project" value="TreeGrafter"/>
</dbReference>
<dbReference type="GO" id="GO:0060267">
    <property type="term" value="P:positive regulation of respiratory burst"/>
    <property type="evidence" value="ECO:0007669"/>
    <property type="project" value="Ensembl"/>
</dbReference>
<dbReference type="GO" id="GO:1903076">
    <property type="term" value="P:regulation of protein localization to plasma membrane"/>
    <property type="evidence" value="ECO:0007669"/>
    <property type="project" value="Ensembl"/>
</dbReference>
<dbReference type="GO" id="GO:0042311">
    <property type="term" value="P:vasodilation"/>
    <property type="evidence" value="ECO:0007669"/>
    <property type="project" value="Ensembl"/>
</dbReference>
<dbReference type="GO" id="GO:0042060">
    <property type="term" value="P:wound healing"/>
    <property type="evidence" value="ECO:0007669"/>
    <property type="project" value="Ensembl"/>
</dbReference>
<dbReference type="CDD" id="cd04367">
    <property type="entry name" value="IlGF_insulin_like"/>
    <property type="match status" value="1"/>
</dbReference>
<dbReference type="FunFam" id="1.10.100.10:FF:000003">
    <property type="entry name" value="Insulin"/>
    <property type="match status" value="1"/>
</dbReference>
<dbReference type="Gene3D" id="1.10.100.10">
    <property type="entry name" value="Insulin-like"/>
    <property type="match status" value="1"/>
</dbReference>
<dbReference type="InterPro" id="IPR004825">
    <property type="entry name" value="Insulin"/>
</dbReference>
<dbReference type="InterPro" id="IPR016179">
    <property type="entry name" value="Insulin-like"/>
</dbReference>
<dbReference type="InterPro" id="IPR036438">
    <property type="entry name" value="Insulin-like_sf"/>
</dbReference>
<dbReference type="InterPro" id="IPR022353">
    <property type="entry name" value="Insulin_CS"/>
</dbReference>
<dbReference type="InterPro" id="IPR022352">
    <property type="entry name" value="Insulin_family"/>
</dbReference>
<dbReference type="PANTHER" id="PTHR11454:SF9">
    <property type="entry name" value="INSULIN"/>
    <property type="match status" value="1"/>
</dbReference>
<dbReference type="PANTHER" id="PTHR11454">
    <property type="entry name" value="INSULIN/INSULIN GROWTH FACTOR"/>
    <property type="match status" value="1"/>
</dbReference>
<dbReference type="Pfam" id="PF00049">
    <property type="entry name" value="Insulin"/>
    <property type="match status" value="1"/>
</dbReference>
<dbReference type="PRINTS" id="PR00277">
    <property type="entry name" value="INSULIN"/>
</dbReference>
<dbReference type="PRINTS" id="PR00276">
    <property type="entry name" value="INSULINFAMLY"/>
</dbReference>
<dbReference type="SMART" id="SM00078">
    <property type="entry name" value="IlGF"/>
    <property type="match status" value="1"/>
</dbReference>
<dbReference type="SUPFAM" id="SSF56994">
    <property type="entry name" value="Insulin-like"/>
    <property type="match status" value="1"/>
</dbReference>
<dbReference type="PROSITE" id="PS00262">
    <property type="entry name" value="INSULIN"/>
    <property type="match status" value="1"/>
</dbReference>
<organism>
    <name type="scientific">Octodon degus</name>
    <name type="common">Degu</name>
    <name type="synonym">Sciurus degus</name>
    <dbReference type="NCBI Taxonomy" id="10160"/>
    <lineage>
        <taxon>Eukaryota</taxon>
        <taxon>Metazoa</taxon>
        <taxon>Chordata</taxon>
        <taxon>Craniata</taxon>
        <taxon>Vertebrata</taxon>
        <taxon>Euteleostomi</taxon>
        <taxon>Mammalia</taxon>
        <taxon>Eutheria</taxon>
        <taxon>Euarchontoglires</taxon>
        <taxon>Glires</taxon>
        <taxon>Rodentia</taxon>
        <taxon>Hystricomorpha</taxon>
        <taxon>Octodontidae</taxon>
        <taxon>Octodon</taxon>
    </lineage>
</organism>
<accession>P17715</accession>
<keyword id="KW-0119">Carbohydrate metabolism</keyword>
<keyword id="KW-0165">Cleavage on pair of basic residues</keyword>
<keyword id="KW-0903">Direct protein sequencing</keyword>
<keyword id="KW-1015">Disulfide bond</keyword>
<keyword id="KW-0313">Glucose metabolism</keyword>
<keyword id="KW-0372">Hormone</keyword>
<keyword id="KW-1185">Reference proteome</keyword>
<keyword id="KW-0964">Secreted</keyword>
<keyword id="KW-0732">Signal</keyword>